<comment type="function">
    <molecule>Alpha-conotoxin VxXXB</molecule>
    <text evidence="5 6">Alpha-conotoxins act on postsynaptic membranes, they bind to the nicotinic acetylcholine receptors (nAChR) and thus inhibit them. Through its two C-terminal domains, this homodimeric protein would bind to two nAChR allosteric sites, located outside the nAChR C-loop of the principal binding face and at the adjacent binding interface in a clockwise direction (PubMed:37124228). It specifically blocks mammalian neuronal nAChR of the alpha-7/CHRNA7 (IC(50)=0.4 nM), alpha-3-beta-2/CHRNA3-CHRNB2 (IC(50)=8.4 nM) and alpha-4-beta-2/CHRNA4-CHRNB2 (IC(50)=228 nM) subtypes (PubMed:16790424). It inhibits alpha-7/CHRNA7, alpha-3-beta-2/CHRNA3-CHRNB2 and alpha-4-beta-2/CHRNA4-CHRNB2 nAChR subtypes more efficiently than VxXXA and VxXXC (PubMed:16790424).</text>
</comment>
<comment type="subunit">
    <text evidence="2 3 5">Homodimer (PubMed:16790424). Pseudo-homodimer (identical sequence, different post-translational modifications) (By similarity).</text>
</comment>
<comment type="subcellular location">
    <subcellularLocation>
        <location evidence="5">Secreted</location>
    </subcellularLocation>
</comment>
<comment type="tissue specificity">
    <text evidence="10">Expressed by the venom duct.</text>
</comment>
<comment type="domain">
    <text evidence="9">The cysteine framework is XX (C-CC-C-CC-C-C-C-C).</text>
</comment>
<comment type="domain">
    <text evidence="11">Displays a mini-granulin fold, a structure composed of two short, stacked beta-hairpins connected by two parallel disulfide bonds. This newly described fold is derived from the same cysteine connectivity as knottins (ICK fold). The name 'mini-granulin fold' comes from the structural homology with the N-terminal region of the human granulin.</text>
</comment>
<comment type="domain">
    <text evidence="6">This homodimeric protein forms a dimer by linking its N-terminal domains, while its two C-terminal domains, located at both ends of the dimer, interact with two distinct subunits of the acetylcholine receptor, occupying two different sites. The first binding site lies outside a nAChR C-loop, while the second binding site is located close to the N-terminus of the adjacent subunit.</text>
</comment>
<comment type="mass spectrometry" mass="5741.4" method="Electrospray" evidence="5">
    <molecule>Alpha-conotoxin VxXXB</molecule>
</comment>
<comment type="miscellaneous">
    <text evidence="5">[desGly-95]VxXXB is a minor form.</text>
</comment>
<comment type="similarity">
    <text evidence="9">Belongs to the conotoxin D superfamily.</text>
</comment>
<accession>P0C1W6</accession>
<accession>C4PWC2</accession>
<feature type="signal peptide" evidence="4">
    <location>
        <begin position="1"/>
        <end position="24"/>
    </location>
</feature>
<feature type="propeptide" id="PRO_0000391783" evidence="5">
    <location>
        <begin position="25"/>
        <end position="45"/>
    </location>
</feature>
<feature type="chain" id="PRO_0000249794" description="Alpha-conotoxin VxXXB" evidence="5">
    <location>
        <begin position="46"/>
        <end position="95"/>
    </location>
</feature>
<feature type="chain" id="PRO_0000249795" description="Alpha-conotoxin [des-Gly95]VxXXB" evidence="5">
    <location>
        <begin position="46"/>
        <end position="94"/>
    </location>
</feature>
<feature type="modified residue" description="4-carboxyglutamate" evidence="5">
    <location>
        <position position="48"/>
    </location>
</feature>
<feature type="modified residue" description="4-carboxyglutamate" evidence="5">
    <location>
        <position position="50"/>
    </location>
</feature>
<feature type="modified residue" description="4-hydroxyproline; partial" evidence="5">
    <location>
        <position position="59"/>
    </location>
</feature>
<feature type="modified residue" description="4-hydroxyproline; partial" evidence="10">
    <location>
        <position position="75"/>
    </location>
</feature>
<feature type="modified residue" description="4-hydroxyproline; partial" evidence="10">
    <location>
        <position position="94"/>
    </location>
</feature>
<feature type="modified residue" description="Proline amide; in form [desGly-95]VxXXB" evidence="10">
    <location>
        <position position="94"/>
    </location>
</feature>
<feature type="disulfide bond" description="Interchain (with C-63)" evidence="1">
    <location>
        <position position="51"/>
    </location>
</feature>
<feature type="disulfide bond" description="Interchain (with C-51)" evidence="1">
    <location>
        <position position="63"/>
    </location>
</feature>
<feature type="disulfide bond" evidence="1">
    <location>
        <begin position="64"/>
        <end position="73"/>
    </location>
</feature>
<feature type="disulfide bond" evidence="11 14">
    <location>
        <begin position="69"/>
        <end position="81"/>
    </location>
</feature>
<feature type="disulfide bond" evidence="11 14">
    <location>
        <begin position="74"/>
        <end position="91"/>
    </location>
</feature>
<feature type="disulfide bond" evidence="11 14">
    <location>
        <begin position="79"/>
        <end position="93"/>
    </location>
</feature>
<feature type="sequence conflict" description="In Ref. 1; CAX51120." evidence="9" ref="1">
    <original>C</original>
    <variation>R</variation>
    <location>
        <position position="91"/>
    </location>
</feature>
<feature type="strand" evidence="15">
    <location>
        <begin position="75"/>
        <end position="78"/>
    </location>
</feature>
<feature type="strand" evidence="15">
    <location>
        <begin position="80"/>
        <end position="84"/>
    </location>
</feature>
<feature type="turn" evidence="15">
    <location>
        <begin position="85"/>
        <end position="87"/>
    </location>
</feature>
<feature type="strand" evidence="15">
    <location>
        <begin position="88"/>
        <end position="94"/>
    </location>
</feature>
<name>CDKB_CONVX</name>
<evidence type="ECO:0000250" key="1">
    <source>
        <dbReference type="UniProtKB" id="A0A0A0VBX4"/>
    </source>
</evidence>
<evidence type="ECO:0000250" key="2">
    <source>
        <dbReference type="UniProtKB" id="C3VVN5"/>
    </source>
</evidence>
<evidence type="ECO:0000250" key="3">
    <source>
        <dbReference type="UniProtKB" id="P0C1W5"/>
    </source>
</evidence>
<evidence type="ECO:0000255" key="4"/>
<evidence type="ECO:0000269" key="5">
    <source>
    </source>
</evidence>
<evidence type="ECO:0000269" key="6">
    <source>
    </source>
</evidence>
<evidence type="ECO:0000303" key="7">
    <source>
    </source>
</evidence>
<evidence type="ECO:0000303" key="8">
    <source>
    </source>
</evidence>
<evidence type="ECO:0000305" key="9"/>
<evidence type="ECO:0000305" key="10">
    <source>
    </source>
</evidence>
<evidence type="ECO:0000305" key="11">
    <source>
    </source>
</evidence>
<evidence type="ECO:0000312" key="12">
    <source>
        <dbReference type="EMBL" id="CAX51120.1"/>
    </source>
</evidence>
<evidence type="ECO:0000312" key="13">
    <source>
        <dbReference type="PDB" id="7TXF"/>
    </source>
</evidence>
<evidence type="ECO:0007744" key="14">
    <source>
        <dbReference type="PDB" id="7TXF"/>
    </source>
</evidence>
<evidence type="ECO:0007829" key="15">
    <source>
        <dbReference type="PDB" id="7TXF"/>
    </source>
</evidence>
<keyword id="KW-0002">3D-structure</keyword>
<keyword id="KW-0008">Acetylcholine receptor inhibiting toxin</keyword>
<keyword id="KW-0027">Amidation</keyword>
<keyword id="KW-0903">Direct protein sequencing</keyword>
<keyword id="KW-1015">Disulfide bond</keyword>
<keyword id="KW-0301">Gamma-carboxyglutamic acid</keyword>
<keyword id="KW-0379">Hydroxylation</keyword>
<keyword id="KW-0872">Ion channel impairing toxin</keyword>
<keyword id="KW-0528">Neurotoxin</keyword>
<keyword id="KW-0629">Postsynaptic neurotoxin</keyword>
<keyword id="KW-0964">Secreted</keyword>
<keyword id="KW-0732">Signal</keyword>
<keyword id="KW-0800">Toxin</keyword>
<dbReference type="EMBL" id="FN178634">
    <property type="protein sequence ID" value="CAX51120.1"/>
    <property type="molecule type" value="mRNA"/>
</dbReference>
<dbReference type="PDB" id="7TXF">
    <property type="method" value="X-ray"/>
    <property type="resolution" value="2.47 A"/>
    <property type="chains" value="F/G/H=66-95"/>
</dbReference>
<dbReference type="PDBsum" id="7TXF"/>
<dbReference type="SMR" id="P0C1W6"/>
<dbReference type="ConoServer" id="1685">
    <property type="toxin name" value="VxXXB"/>
</dbReference>
<dbReference type="ConoServer" id="3631">
    <property type="toxin name" value="VxXXB precursor"/>
</dbReference>
<dbReference type="GO" id="GO:0005576">
    <property type="term" value="C:extracellular region"/>
    <property type="evidence" value="ECO:0007669"/>
    <property type="project" value="UniProtKB-SubCell"/>
</dbReference>
<dbReference type="GO" id="GO:0035792">
    <property type="term" value="C:host cell postsynaptic membrane"/>
    <property type="evidence" value="ECO:0007669"/>
    <property type="project" value="UniProtKB-KW"/>
</dbReference>
<dbReference type="GO" id="GO:0030550">
    <property type="term" value="F:acetylcholine receptor inhibitor activity"/>
    <property type="evidence" value="ECO:0007669"/>
    <property type="project" value="UniProtKB-KW"/>
</dbReference>
<dbReference type="GO" id="GO:0099106">
    <property type="term" value="F:ion channel regulator activity"/>
    <property type="evidence" value="ECO:0007669"/>
    <property type="project" value="UniProtKB-KW"/>
</dbReference>
<dbReference type="GO" id="GO:0090729">
    <property type="term" value="F:toxin activity"/>
    <property type="evidence" value="ECO:0007669"/>
    <property type="project" value="UniProtKB-KW"/>
</dbReference>
<organism>
    <name type="scientific">Conus vexillum</name>
    <name type="common">Flag cone</name>
    <dbReference type="NCBI Taxonomy" id="89431"/>
    <lineage>
        <taxon>Eukaryota</taxon>
        <taxon>Metazoa</taxon>
        <taxon>Spiralia</taxon>
        <taxon>Lophotrochozoa</taxon>
        <taxon>Mollusca</taxon>
        <taxon>Gastropoda</taxon>
        <taxon>Caenogastropoda</taxon>
        <taxon>Neogastropoda</taxon>
        <taxon>Conoidea</taxon>
        <taxon>Conidae</taxon>
        <taxon>Conus</taxon>
        <taxon>Rhizoconus</taxon>
    </lineage>
</organism>
<protein>
    <recommendedName>
        <fullName evidence="8">Alpha-conotoxin VxXXB</fullName>
    </recommendedName>
    <alternativeName>
        <fullName evidence="8">Alpha-D-conotoxin VxXXB</fullName>
    </alternativeName>
    <alternativeName>
        <fullName evidence="12">Vx20.2</fullName>
    </alternativeName>
    <alternativeName>
        <fullName evidence="7">VxXIIB</fullName>
    </alternativeName>
    <component>
        <recommendedName>
            <fullName evidence="10">Alpha-conotoxin [des-Gly95]VxXXB</fullName>
        </recommendedName>
    </component>
</protein>
<sequence length="95" mass="10545">MPKLAVVLLVLLILPLSYFDAAGGQAVQGDWRGNRLARDLQRGGRDDESECIINTRDSPWGRCCRTRMCGSMCCPRNGCTCVYHWRRGHGCSCPG</sequence>
<reference key="1">
    <citation type="journal article" date="2009" name="Biochemistry">
        <title>Novel alpha D-conopeptides and their precursors identified by cDNA cloning define the D-conotoxin superfamily.</title>
        <authorList>
            <person name="Loughnan M.L."/>
            <person name="Nicke A."/>
            <person name="Lawrence N."/>
            <person name="Lewis R.J."/>
        </authorList>
    </citation>
    <scope>NUCLEOTIDE SEQUENCE [MRNA]</scope>
    <source>
        <tissue>Venom duct</tissue>
    </source>
</reference>
<reference key="2">
    <citation type="journal article" date="2006" name="J. Biol. Chem.">
        <title>Identification of a novel class of nicotinic receptor antagonists: dimeric conotoxins VxXIIA, VxXIIB and VxXIIC from Conus vexillum.</title>
        <authorList>
            <person name="Loughnan M."/>
            <person name="Nicke A."/>
            <person name="Jones A."/>
            <person name="Schroeder C.I."/>
            <person name="Nevin S.T."/>
            <person name="Adams D.J."/>
            <person name="Alewood P.F."/>
            <person name="Lewis R.J."/>
        </authorList>
    </citation>
    <scope>PROTEIN SEQUENCE OF 46-95</scope>
    <scope>HYDROXYLATION AT PRO-59; PRO-75 AND PRO-94</scope>
    <scope>GAMMA-CARBOXYGLUTAMATION AT GLU-48 AND GLU-50</scope>
    <scope>AMIDATION AT PRO-94</scope>
    <scope>MASS SPECTROMETRY</scope>
    <scope>SUBUNIT</scope>
    <scope>FUNCTION</scope>
    <scope>SUBCELLULAR LOCATION</scope>
    <source>
        <tissue>Venom</tissue>
    </source>
</reference>
<reference evidence="13" key="3">
    <citation type="journal article" date="2023" name="Front. Pharmacol.">
        <title>Unravelling the allosteric binding mode of alphaD-VxXXB at nicotinic acetylcholine receptors.</title>
        <authorList>
            <person name="Ho T.N."/>
            <person name="Abraham N."/>
            <person name="Lewis R.J."/>
        </authorList>
    </citation>
    <scope>X-RAY CRYSTALLOGRAPHY (2.47 ANGSTROMS) OF 66-95 IN COMPLEX WITH L.STAGNALIS ACETYLCHOLINE-BINDING PROTEIN</scope>
    <scope>SYNTHESIS OF 66-95</scope>
    <scope>DISULFIDE BONDS</scope>
    <scope>3D-STRUCTURE MODELING OF 66-95 IN COMPLEX WITH ALPHA-7 AND ALPHA-3-BETA-4 NACHR</scope>
</reference>
<proteinExistence type="evidence at protein level"/>